<name>CH10_SYNS9</name>
<feature type="chain" id="PRO_1000025389" description="Co-chaperonin GroES">
    <location>
        <begin position="1"/>
        <end position="103"/>
    </location>
</feature>
<dbReference type="EMBL" id="CP000097">
    <property type="protein sequence ID" value="ABB25473.1"/>
    <property type="molecule type" value="Genomic_DNA"/>
</dbReference>
<dbReference type="RefSeq" id="WP_011359322.1">
    <property type="nucleotide sequence ID" value="NC_007513.1"/>
</dbReference>
<dbReference type="SMR" id="Q3AZK4"/>
<dbReference type="STRING" id="316279.Syncc9902_0505"/>
<dbReference type="KEGG" id="sye:Syncc9902_0505"/>
<dbReference type="eggNOG" id="COG0234">
    <property type="taxonomic scope" value="Bacteria"/>
</dbReference>
<dbReference type="HOGENOM" id="CLU_132825_2_1_3"/>
<dbReference type="OrthoDB" id="9806791at2"/>
<dbReference type="Proteomes" id="UP000002712">
    <property type="component" value="Chromosome"/>
</dbReference>
<dbReference type="GO" id="GO:0005737">
    <property type="term" value="C:cytoplasm"/>
    <property type="evidence" value="ECO:0007669"/>
    <property type="project" value="UniProtKB-SubCell"/>
</dbReference>
<dbReference type="GO" id="GO:0005524">
    <property type="term" value="F:ATP binding"/>
    <property type="evidence" value="ECO:0007669"/>
    <property type="project" value="InterPro"/>
</dbReference>
<dbReference type="GO" id="GO:0046872">
    <property type="term" value="F:metal ion binding"/>
    <property type="evidence" value="ECO:0007669"/>
    <property type="project" value="TreeGrafter"/>
</dbReference>
<dbReference type="GO" id="GO:0044183">
    <property type="term" value="F:protein folding chaperone"/>
    <property type="evidence" value="ECO:0007669"/>
    <property type="project" value="InterPro"/>
</dbReference>
<dbReference type="GO" id="GO:0051087">
    <property type="term" value="F:protein-folding chaperone binding"/>
    <property type="evidence" value="ECO:0007669"/>
    <property type="project" value="TreeGrafter"/>
</dbReference>
<dbReference type="GO" id="GO:0051082">
    <property type="term" value="F:unfolded protein binding"/>
    <property type="evidence" value="ECO:0007669"/>
    <property type="project" value="TreeGrafter"/>
</dbReference>
<dbReference type="GO" id="GO:0051085">
    <property type="term" value="P:chaperone cofactor-dependent protein refolding"/>
    <property type="evidence" value="ECO:0007669"/>
    <property type="project" value="TreeGrafter"/>
</dbReference>
<dbReference type="CDD" id="cd00320">
    <property type="entry name" value="cpn10"/>
    <property type="match status" value="1"/>
</dbReference>
<dbReference type="FunFam" id="2.30.33.40:FF:000001">
    <property type="entry name" value="10 kDa chaperonin"/>
    <property type="match status" value="1"/>
</dbReference>
<dbReference type="Gene3D" id="2.30.33.40">
    <property type="entry name" value="GroES chaperonin"/>
    <property type="match status" value="1"/>
</dbReference>
<dbReference type="HAMAP" id="MF_00580">
    <property type="entry name" value="CH10"/>
    <property type="match status" value="1"/>
</dbReference>
<dbReference type="InterPro" id="IPR020818">
    <property type="entry name" value="Chaperonin_GroES"/>
</dbReference>
<dbReference type="InterPro" id="IPR037124">
    <property type="entry name" value="Chaperonin_GroES_sf"/>
</dbReference>
<dbReference type="InterPro" id="IPR018369">
    <property type="entry name" value="Chaprnonin_Cpn10_CS"/>
</dbReference>
<dbReference type="InterPro" id="IPR011032">
    <property type="entry name" value="GroES-like_sf"/>
</dbReference>
<dbReference type="NCBIfam" id="NF001530">
    <property type="entry name" value="PRK00364.1-6"/>
    <property type="match status" value="1"/>
</dbReference>
<dbReference type="NCBIfam" id="NF001531">
    <property type="entry name" value="PRK00364.2-2"/>
    <property type="match status" value="1"/>
</dbReference>
<dbReference type="NCBIfam" id="NF001533">
    <property type="entry name" value="PRK00364.2-4"/>
    <property type="match status" value="1"/>
</dbReference>
<dbReference type="NCBIfam" id="NF001534">
    <property type="entry name" value="PRK00364.2-5"/>
    <property type="match status" value="1"/>
</dbReference>
<dbReference type="PANTHER" id="PTHR10772">
    <property type="entry name" value="10 KDA HEAT SHOCK PROTEIN"/>
    <property type="match status" value="1"/>
</dbReference>
<dbReference type="PANTHER" id="PTHR10772:SF58">
    <property type="entry name" value="CO-CHAPERONIN GROES"/>
    <property type="match status" value="1"/>
</dbReference>
<dbReference type="Pfam" id="PF00166">
    <property type="entry name" value="Cpn10"/>
    <property type="match status" value="1"/>
</dbReference>
<dbReference type="PRINTS" id="PR00297">
    <property type="entry name" value="CHAPERONIN10"/>
</dbReference>
<dbReference type="SMART" id="SM00883">
    <property type="entry name" value="Cpn10"/>
    <property type="match status" value="1"/>
</dbReference>
<dbReference type="SUPFAM" id="SSF50129">
    <property type="entry name" value="GroES-like"/>
    <property type="match status" value="1"/>
</dbReference>
<dbReference type="PROSITE" id="PS00681">
    <property type="entry name" value="CHAPERONINS_CPN10"/>
    <property type="match status" value="1"/>
</dbReference>
<evidence type="ECO:0000255" key="1">
    <source>
        <dbReference type="HAMAP-Rule" id="MF_00580"/>
    </source>
</evidence>
<keyword id="KW-0143">Chaperone</keyword>
<keyword id="KW-0963">Cytoplasm</keyword>
<keyword id="KW-1185">Reference proteome</keyword>
<protein>
    <recommendedName>
        <fullName evidence="1">Co-chaperonin GroES</fullName>
    </recommendedName>
    <alternativeName>
        <fullName evidence="1">10 kDa chaperonin</fullName>
    </alternativeName>
    <alternativeName>
        <fullName evidence="1">Chaperonin-10</fullName>
        <shortName evidence="1">Cpn10</shortName>
    </alternativeName>
</protein>
<comment type="function">
    <text evidence="1">Together with the chaperonin GroEL, plays an essential role in assisting protein folding. The GroEL-GroES system forms a nano-cage that allows encapsulation of the non-native substrate proteins and provides a physical environment optimized to promote and accelerate protein folding. GroES binds to the apical surface of the GroEL ring, thereby capping the opening of the GroEL channel.</text>
</comment>
<comment type="subunit">
    <text evidence="1">Heptamer of 7 subunits arranged in a ring. Interacts with the chaperonin GroEL.</text>
</comment>
<comment type="subcellular location">
    <subcellularLocation>
        <location evidence="1">Cytoplasm</location>
    </subcellularLocation>
</comment>
<comment type="similarity">
    <text evidence="1">Belongs to the GroES chaperonin family.</text>
</comment>
<organism>
    <name type="scientific">Synechococcus sp. (strain CC9902)</name>
    <dbReference type="NCBI Taxonomy" id="316279"/>
    <lineage>
        <taxon>Bacteria</taxon>
        <taxon>Bacillati</taxon>
        <taxon>Cyanobacteriota</taxon>
        <taxon>Cyanophyceae</taxon>
        <taxon>Synechococcales</taxon>
        <taxon>Synechococcaceae</taxon>
        <taxon>Synechococcus</taxon>
    </lineage>
</organism>
<gene>
    <name evidence="1" type="primary">groES</name>
    <name evidence="1" type="synonym">groS</name>
    <name type="ordered locus">Syncc9902_0505</name>
</gene>
<proteinExistence type="inferred from homology"/>
<reference key="1">
    <citation type="submission" date="2005-08" db="EMBL/GenBank/DDBJ databases">
        <title>Complete sequence of Synechococcus sp. CC9902.</title>
        <authorList>
            <person name="Copeland A."/>
            <person name="Lucas S."/>
            <person name="Lapidus A."/>
            <person name="Barry K."/>
            <person name="Detter J.C."/>
            <person name="Glavina T."/>
            <person name="Hammon N."/>
            <person name="Israni S."/>
            <person name="Pitluck S."/>
            <person name="Martinez M."/>
            <person name="Schmutz J."/>
            <person name="Larimer F."/>
            <person name="Land M."/>
            <person name="Kyrpides N."/>
            <person name="Ivanova N."/>
            <person name="Richardson P."/>
        </authorList>
    </citation>
    <scope>NUCLEOTIDE SEQUENCE [LARGE SCALE GENOMIC DNA]</scope>
    <source>
        <strain>CC9902</strain>
    </source>
</reference>
<sequence>MAAVSLSVSTVKPLGDRVFVKVSESEEKTAGGILLPDTAKEKPQVGEVVQVGPGKPNEDGSRQAPEVGIGDKVLYSKYAGTDIKLGSDEYVLLSEKDILAIVN</sequence>
<accession>Q3AZK4</accession>